<comment type="function">
    <text evidence="2 3 4">The small GTPases Rab are key regulators of intracellular membrane trafficking, from the formation of transport vesicles to their fusion with membranes. Rabs cycle between an inactive GDP-bound form and an active GTP-bound form that is able to recruit to membranes different set of downstream effectors directly responsible for vesicle formation, movement, tethering and fusion (By similarity). Involved in membrane trafficking between the Golgi complex and endosomes during early embryonic development (By similarity). Regulates the Golgi to endosome transport of FGFR-containing vesicles during early development, a key process for developing basement membrane and epiblast and primitive endoderm lineages during early postimplantation development. May act by modulating the kinesin KIF16B-cargo association to endosomes (By similarity). Regulates, together with its guanine nucleotide exchange factor DENND6A, the specific endocytic transport of ADAM10, N-cadherin/CDH2 shedding and cell-cell adhesion. Mediates endosomal tethering and fusion through the interaction with RUFY1 and RAB4B (By similarity). Interaction with RAB11FIP1 may function in the process of neurite formation (By similarity).</text>
</comment>
<comment type="catalytic activity">
    <reaction evidence="2">
        <text>GTP + H2O = GDP + phosphate + H(+)</text>
        <dbReference type="Rhea" id="RHEA:19669"/>
        <dbReference type="ChEBI" id="CHEBI:15377"/>
        <dbReference type="ChEBI" id="CHEBI:15378"/>
        <dbReference type="ChEBI" id="CHEBI:37565"/>
        <dbReference type="ChEBI" id="CHEBI:43474"/>
        <dbReference type="ChEBI" id="CHEBI:58189"/>
        <dbReference type="EC" id="3.6.5.2"/>
    </reaction>
    <physiologicalReaction direction="left-to-right" evidence="2">
        <dbReference type="Rhea" id="RHEA:19670"/>
    </physiologicalReaction>
</comment>
<comment type="cofactor">
    <cofactor evidence="2">
        <name>Mg(2+)</name>
        <dbReference type="ChEBI" id="CHEBI:18420"/>
    </cofactor>
</comment>
<comment type="activity regulation">
    <text evidence="2">Regulated by guanine nucleotide exchange factors (GEFs) including DENND6A and DENND6B which promote the exchange of bound GDP for free GTP. Regulated by GTPase activating proteins (GAPs) which increase the GTP hydrolysis activity. Inhibited by GDP dissociation inhibitors (GDIs) which prevent Rab-GDP dissociation.</text>
</comment>
<comment type="subunit">
    <text evidence="2">Interacts with ZFYVE20. Interacts with KIF16B. Interacts (GTP-bound form) with RUFY1; the interaction recruits RUFY1 onto endosomal membranes. Interacts (GTP-bound form) with RAB11FIP1 (via its C-terminus); the interactions doesn't mediate RAB11FIP1 rectruitment to membranes (By similarity). Interacts with RAB11FIP2 (By similarity).</text>
</comment>
<comment type="subcellular location">
    <subcellularLocation>
        <location evidence="2">Recycling endosome</location>
    </subcellularLocation>
    <subcellularLocation>
        <location evidence="2">Early endosome membrane</location>
        <topology evidence="2">Lipid-anchor</topology>
        <orientation evidence="2">Cytoplasmic side</orientation>
    </subcellularLocation>
    <subcellularLocation>
        <location evidence="2">Golgi apparatus membrane</location>
        <topology evidence="2">Lipid-anchor</topology>
        <orientation evidence="2">Cytoplasmic side</orientation>
    </subcellularLocation>
    <subcellularLocation>
        <location evidence="2">Golgi apparatus</location>
        <location evidence="2">trans-Golgi network membrane</location>
        <topology evidence="2">Lipid-anchor</topology>
        <orientation evidence="2">Cytoplasmic side</orientation>
    </subcellularLocation>
    <subcellularLocation>
        <location evidence="2">Cytoplasmic vesicle</location>
        <location evidence="2">Phagosome</location>
    </subcellularLocation>
    <text evidence="2">Recruited to recycling endosomes by DENND6A.</text>
</comment>
<comment type="domain">
    <text evidence="2">Switch 1, switch 2 and the interswitch regions are characteristic of Rab GTPases and mediate the interactions with Rab downstream effectors. The switch regions undergo conformational changes upon nucleotide binding which drives interaction with specific sets of effector proteins, with most effectors only binding to GTP-bound Rab.</text>
</comment>
<comment type="similarity">
    <text evidence="6">Belongs to the small GTPase superfamily. Rab family.</text>
</comment>
<protein>
    <recommendedName>
        <fullName>Ras-related protein Rab-14</fullName>
        <ecNumber evidence="2">3.6.5.2</ecNumber>
    </recommendedName>
</protein>
<sequence length="215" mass="23927">MATTPYNYSYIFKYIIIGDMGVGKSCLLHQFTEKKFMADCPHTIGVEFGTRIIEVSGQKIKLQIWDTAGQERFRAVTRSYYRGAAGALMVYDITRRSTYNHLSSWLTDARNLTNPNTVIILIGNKADLEAQRDVTYEEAKQFAEENGLLFLEASAKTGENVEDAFLEAAKKIYQNIQDGSLDLNAAESGVQHKPSAPQGGRLTSEPQPQREGCGC</sequence>
<name>RAB14_PIG</name>
<organism>
    <name type="scientific">Sus scrofa</name>
    <name type="common">Pig</name>
    <dbReference type="NCBI Taxonomy" id="9823"/>
    <lineage>
        <taxon>Eukaryota</taxon>
        <taxon>Metazoa</taxon>
        <taxon>Chordata</taxon>
        <taxon>Craniata</taxon>
        <taxon>Vertebrata</taxon>
        <taxon>Euteleostomi</taxon>
        <taxon>Mammalia</taxon>
        <taxon>Eutheria</taxon>
        <taxon>Laurasiatheria</taxon>
        <taxon>Artiodactyla</taxon>
        <taxon>Suina</taxon>
        <taxon>Suidae</taxon>
        <taxon>Sus</taxon>
    </lineage>
</organism>
<gene>
    <name type="primary">RAB14</name>
</gene>
<accession>Q52NJ6</accession>
<proteinExistence type="evidence at transcript level"/>
<reference key="1">
    <citation type="submission" date="2005-04" db="EMBL/GenBank/DDBJ databases">
        <authorList>
            <person name="Liu G.Y."/>
            <person name="Xiong Z.Y."/>
        </authorList>
    </citation>
    <scope>NUCLEOTIDE SEQUENCE [LARGE SCALE MRNA]</scope>
</reference>
<feature type="initiator methionine" description="Removed" evidence="2">
    <location>
        <position position="1"/>
    </location>
</feature>
<feature type="chain" id="PRO_0000253739" description="Ras-related protein Rab-14">
    <location>
        <begin position="2"/>
        <end position="215"/>
    </location>
</feature>
<feature type="region of interest" description="Disordered" evidence="5">
    <location>
        <begin position="188"/>
        <end position="215"/>
    </location>
</feature>
<feature type="short sequence motif" description="Switch 1" evidence="2">
    <location>
        <begin position="42"/>
        <end position="47"/>
    </location>
</feature>
<feature type="short sequence motif" description="Switch 2" evidence="2">
    <location>
        <begin position="68"/>
        <end position="77"/>
    </location>
</feature>
<feature type="binding site" evidence="2">
    <location>
        <position position="21"/>
    </location>
    <ligand>
        <name>GTP</name>
        <dbReference type="ChEBI" id="CHEBI:37565"/>
    </ligand>
</feature>
<feature type="binding site" evidence="2">
    <location>
        <position position="22"/>
    </location>
    <ligand>
        <name>GTP</name>
        <dbReference type="ChEBI" id="CHEBI:37565"/>
    </ligand>
</feature>
<feature type="binding site" evidence="2">
    <location>
        <position position="23"/>
    </location>
    <ligand>
        <name>GTP</name>
        <dbReference type="ChEBI" id="CHEBI:37565"/>
    </ligand>
</feature>
<feature type="binding site" evidence="2">
    <location>
        <position position="24"/>
    </location>
    <ligand>
        <name>GTP</name>
        <dbReference type="ChEBI" id="CHEBI:37565"/>
    </ligand>
</feature>
<feature type="binding site" evidence="2">
    <location>
        <position position="25"/>
    </location>
    <ligand>
        <name>GTP</name>
        <dbReference type="ChEBI" id="CHEBI:37565"/>
    </ligand>
</feature>
<feature type="binding site" evidence="2">
    <location>
        <position position="25"/>
    </location>
    <ligand>
        <name>Mg(2+)</name>
        <dbReference type="ChEBI" id="CHEBI:18420"/>
    </ligand>
</feature>
<feature type="binding site" evidence="2">
    <location>
        <position position="26"/>
    </location>
    <ligand>
        <name>GTP</name>
        <dbReference type="ChEBI" id="CHEBI:37565"/>
    </ligand>
</feature>
<feature type="binding site" evidence="2">
    <location>
        <position position="38"/>
    </location>
    <ligand>
        <name>GTP</name>
        <dbReference type="ChEBI" id="CHEBI:37565"/>
    </ligand>
</feature>
<feature type="binding site" evidence="2">
    <location>
        <position position="39"/>
    </location>
    <ligand>
        <name>GTP</name>
        <dbReference type="ChEBI" id="CHEBI:37565"/>
    </ligand>
</feature>
<feature type="binding site" evidence="2">
    <location>
        <position position="40"/>
    </location>
    <ligand>
        <name>GTP</name>
        <dbReference type="ChEBI" id="CHEBI:37565"/>
    </ligand>
</feature>
<feature type="binding site" evidence="2">
    <location>
        <position position="42"/>
    </location>
    <ligand>
        <name>GTP</name>
        <dbReference type="ChEBI" id="CHEBI:37565"/>
    </ligand>
</feature>
<feature type="binding site" evidence="2">
    <location>
        <position position="43"/>
    </location>
    <ligand>
        <name>GTP</name>
        <dbReference type="ChEBI" id="CHEBI:37565"/>
    </ligand>
</feature>
<feature type="binding site" evidence="2">
    <location>
        <position position="43"/>
    </location>
    <ligand>
        <name>Mg(2+)</name>
        <dbReference type="ChEBI" id="CHEBI:18420"/>
    </ligand>
</feature>
<feature type="binding site" evidence="2">
    <location>
        <position position="66"/>
    </location>
    <ligand>
        <name>Mg(2+)</name>
        <dbReference type="ChEBI" id="CHEBI:18420"/>
    </ligand>
</feature>
<feature type="binding site" evidence="2">
    <location>
        <position position="69"/>
    </location>
    <ligand>
        <name>GTP</name>
        <dbReference type="ChEBI" id="CHEBI:37565"/>
    </ligand>
</feature>
<feature type="binding site" evidence="2">
    <location>
        <position position="124"/>
    </location>
    <ligand>
        <name>GTP</name>
        <dbReference type="ChEBI" id="CHEBI:37565"/>
    </ligand>
</feature>
<feature type="binding site" evidence="2">
    <location>
        <position position="125"/>
    </location>
    <ligand>
        <name>GTP</name>
        <dbReference type="ChEBI" id="CHEBI:37565"/>
    </ligand>
</feature>
<feature type="binding site" evidence="2">
    <location>
        <position position="127"/>
    </location>
    <ligand>
        <name>GTP</name>
        <dbReference type="ChEBI" id="CHEBI:37565"/>
    </ligand>
</feature>
<feature type="binding site" evidence="2">
    <location>
        <position position="155"/>
    </location>
    <ligand>
        <name>GTP</name>
        <dbReference type="ChEBI" id="CHEBI:37565"/>
    </ligand>
</feature>
<feature type="binding site" evidence="2">
    <location>
        <position position="156"/>
    </location>
    <ligand>
        <name>GTP</name>
        <dbReference type="ChEBI" id="CHEBI:37565"/>
    </ligand>
</feature>
<feature type="modified residue" description="N-acetylalanine" evidence="2">
    <location>
        <position position="2"/>
    </location>
</feature>
<feature type="modified residue" description="Cysteine methyl ester" evidence="1">
    <location>
        <position position="215"/>
    </location>
</feature>
<feature type="lipid moiety-binding region" description="S-geranylgeranyl cysteine" evidence="1">
    <location>
        <position position="213"/>
    </location>
</feature>
<feature type="lipid moiety-binding region" description="S-geranylgeranyl cysteine" evidence="1">
    <location>
        <position position="215"/>
    </location>
</feature>
<keyword id="KW-0007">Acetylation</keyword>
<keyword id="KW-0968">Cytoplasmic vesicle</keyword>
<keyword id="KW-0967">Endosome</keyword>
<keyword id="KW-0333">Golgi apparatus</keyword>
<keyword id="KW-0342">GTP-binding</keyword>
<keyword id="KW-0378">Hydrolase</keyword>
<keyword id="KW-0449">Lipoprotein</keyword>
<keyword id="KW-0460">Magnesium</keyword>
<keyword id="KW-0472">Membrane</keyword>
<keyword id="KW-0479">Metal-binding</keyword>
<keyword id="KW-0488">Methylation</keyword>
<keyword id="KW-0547">Nucleotide-binding</keyword>
<keyword id="KW-0636">Prenylation</keyword>
<keyword id="KW-0653">Protein transport</keyword>
<keyword id="KW-1185">Reference proteome</keyword>
<keyword id="KW-0813">Transport</keyword>
<evidence type="ECO:0000250" key="1"/>
<evidence type="ECO:0000250" key="2">
    <source>
        <dbReference type="UniProtKB" id="P61106"/>
    </source>
</evidence>
<evidence type="ECO:0000250" key="3">
    <source>
        <dbReference type="UniProtKB" id="P61107"/>
    </source>
</evidence>
<evidence type="ECO:0000250" key="4">
    <source>
        <dbReference type="UniProtKB" id="Q91V41"/>
    </source>
</evidence>
<evidence type="ECO:0000256" key="5">
    <source>
        <dbReference type="SAM" id="MobiDB-lite"/>
    </source>
</evidence>
<evidence type="ECO:0000305" key="6"/>
<dbReference type="EC" id="3.6.5.2" evidence="2"/>
<dbReference type="EMBL" id="AY996809">
    <property type="protein sequence ID" value="AAY17505.1"/>
    <property type="molecule type" value="mRNA"/>
</dbReference>
<dbReference type="RefSeq" id="NP_001026953.1">
    <property type="nucleotide sequence ID" value="NM_001031783.1"/>
</dbReference>
<dbReference type="SMR" id="Q52NJ6"/>
<dbReference type="FunCoup" id="Q52NJ6">
    <property type="interactions" value="2173"/>
</dbReference>
<dbReference type="STRING" id="9823.ENSSSCP00000058362"/>
<dbReference type="GlyGen" id="Q52NJ6">
    <property type="glycosylation" value="1 site"/>
</dbReference>
<dbReference type="PaxDb" id="9823-ENSSSCP00000005910"/>
<dbReference type="PeptideAtlas" id="Q52NJ6"/>
<dbReference type="GeneID" id="595112"/>
<dbReference type="KEGG" id="ssc:595112"/>
<dbReference type="CTD" id="51552"/>
<dbReference type="eggNOG" id="KOG0097">
    <property type="taxonomic scope" value="Eukaryota"/>
</dbReference>
<dbReference type="InParanoid" id="Q52NJ6"/>
<dbReference type="OrthoDB" id="9989112at2759"/>
<dbReference type="Proteomes" id="UP000008227">
    <property type="component" value="Unplaced"/>
</dbReference>
<dbReference type="Proteomes" id="UP000314985">
    <property type="component" value="Unplaced"/>
</dbReference>
<dbReference type="Proteomes" id="UP000694570">
    <property type="component" value="Unplaced"/>
</dbReference>
<dbReference type="Proteomes" id="UP000694571">
    <property type="component" value="Unplaced"/>
</dbReference>
<dbReference type="Proteomes" id="UP000694720">
    <property type="component" value="Unplaced"/>
</dbReference>
<dbReference type="Proteomes" id="UP000694722">
    <property type="component" value="Unplaced"/>
</dbReference>
<dbReference type="Proteomes" id="UP000694723">
    <property type="component" value="Unplaced"/>
</dbReference>
<dbReference type="Proteomes" id="UP000694724">
    <property type="component" value="Unplaced"/>
</dbReference>
<dbReference type="Proteomes" id="UP000694725">
    <property type="component" value="Unplaced"/>
</dbReference>
<dbReference type="Proteomes" id="UP000694726">
    <property type="component" value="Unplaced"/>
</dbReference>
<dbReference type="Proteomes" id="UP000694727">
    <property type="component" value="Unplaced"/>
</dbReference>
<dbReference type="Proteomes" id="UP000694728">
    <property type="component" value="Unplaced"/>
</dbReference>
<dbReference type="GO" id="GO:0005829">
    <property type="term" value="C:cytosol"/>
    <property type="evidence" value="ECO:0007669"/>
    <property type="project" value="GOC"/>
</dbReference>
<dbReference type="GO" id="GO:0005769">
    <property type="term" value="C:early endosome"/>
    <property type="evidence" value="ECO:0000318"/>
    <property type="project" value="GO_Central"/>
</dbReference>
<dbReference type="GO" id="GO:0031901">
    <property type="term" value="C:early endosome membrane"/>
    <property type="evidence" value="ECO:0007669"/>
    <property type="project" value="UniProtKB-SubCell"/>
</dbReference>
<dbReference type="GO" id="GO:0012505">
    <property type="term" value="C:endomembrane system"/>
    <property type="evidence" value="ECO:0000318"/>
    <property type="project" value="GO_Central"/>
</dbReference>
<dbReference type="GO" id="GO:0000139">
    <property type="term" value="C:Golgi membrane"/>
    <property type="evidence" value="ECO:0007669"/>
    <property type="project" value="UniProtKB-SubCell"/>
</dbReference>
<dbReference type="GO" id="GO:0045335">
    <property type="term" value="C:phagocytic vesicle"/>
    <property type="evidence" value="ECO:0000250"/>
    <property type="project" value="UniProtKB"/>
</dbReference>
<dbReference type="GO" id="GO:0055037">
    <property type="term" value="C:recycling endosome"/>
    <property type="evidence" value="ECO:0000250"/>
    <property type="project" value="UniProtKB"/>
</dbReference>
<dbReference type="GO" id="GO:0005802">
    <property type="term" value="C:trans-Golgi network"/>
    <property type="evidence" value="ECO:0007669"/>
    <property type="project" value="InterPro"/>
</dbReference>
<dbReference type="GO" id="GO:0003925">
    <property type="term" value="F:G protein activity"/>
    <property type="evidence" value="ECO:0000250"/>
    <property type="project" value="UniProtKB"/>
</dbReference>
<dbReference type="GO" id="GO:0019003">
    <property type="term" value="F:GDP binding"/>
    <property type="evidence" value="ECO:0000250"/>
    <property type="project" value="UniProtKB"/>
</dbReference>
<dbReference type="GO" id="GO:0005525">
    <property type="term" value="F:GTP binding"/>
    <property type="evidence" value="ECO:0000250"/>
    <property type="project" value="UniProtKB"/>
</dbReference>
<dbReference type="GO" id="GO:0003924">
    <property type="term" value="F:GTPase activity"/>
    <property type="evidence" value="ECO:0000250"/>
    <property type="project" value="UniProtKB"/>
</dbReference>
<dbReference type="GO" id="GO:0042742">
    <property type="term" value="P:defense response to bacterium"/>
    <property type="evidence" value="ECO:0007669"/>
    <property type="project" value="InterPro"/>
</dbReference>
<dbReference type="GO" id="GO:0032456">
    <property type="term" value="P:endocytic recycling"/>
    <property type="evidence" value="ECO:0000250"/>
    <property type="project" value="UniProtKB"/>
</dbReference>
<dbReference type="GO" id="GO:0008543">
    <property type="term" value="P:fibroblast growth factor receptor signaling pathway"/>
    <property type="evidence" value="ECO:0000250"/>
    <property type="project" value="UniProtKB"/>
</dbReference>
<dbReference type="GO" id="GO:0006895">
    <property type="term" value="P:Golgi to endosome transport"/>
    <property type="evidence" value="ECO:0000250"/>
    <property type="project" value="UniProtKB"/>
</dbReference>
<dbReference type="GO" id="GO:0006886">
    <property type="term" value="P:intracellular protein transport"/>
    <property type="evidence" value="ECO:0000318"/>
    <property type="project" value="GO_Central"/>
</dbReference>
<dbReference type="GO" id="GO:0001845">
    <property type="term" value="P:phagolysosome assembly"/>
    <property type="evidence" value="ECO:0000318"/>
    <property type="project" value="GO_Central"/>
</dbReference>
<dbReference type="GO" id="GO:0045995">
    <property type="term" value="P:regulation of embryonic development"/>
    <property type="evidence" value="ECO:0000250"/>
    <property type="project" value="UniProtKB"/>
</dbReference>
<dbReference type="GO" id="GO:0032880">
    <property type="term" value="P:regulation of protein localization"/>
    <property type="evidence" value="ECO:0000250"/>
    <property type="project" value="UniProtKB"/>
</dbReference>
<dbReference type="CDD" id="cd04122">
    <property type="entry name" value="Rab14"/>
    <property type="match status" value="1"/>
</dbReference>
<dbReference type="FunFam" id="3.40.50.300:FF:000344">
    <property type="entry name" value="Ras-related protein Rab-14"/>
    <property type="match status" value="1"/>
</dbReference>
<dbReference type="Gene3D" id="3.40.50.300">
    <property type="entry name" value="P-loop containing nucleotide triphosphate hydrolases"/>
    <property type="match status" value="1"/>
</dbReference>
<dbReference type="InterPro" id="IPR027417">
    <property type="entry name" value="P-loop_NTPase"/>
</dbReference>
<dbReference type="InterPro" id="IPR030702">
    <property type="entry name" value="Rab14"/>
</dbReference>
<dbReference type="InterPro" id="IPR050209">
    <property type="entry name" value="Rab_GTPases_membrane_traffic"/>
</dbReference>
<dbReference type="InterPro" id="IPR005225">
    <property type="entry name" value="Small_GTP-bd"/>
</dbReference>
<dbReference type="InterPro" id="IPR001806">
    <property type="entry name" value="Small_GTPase"/>
</dbReference>
<dbReference type="NCBIfam" id="TIGR00231">
    <property type="entry name" value="small_GTP"/>
    <property type="match status" value="1"/>
</dbReference>
<dbReference type="PANTHER" id="PTHR47979">
    <property type="entry name" value="DRAB11-RELATED"/>
    <property type="match status" value="1"/>
</dbReference>
<dbReference type="Pfam" id="PF00071">
    <property type="entry name" value="Ras"/>
    <property type="match status" value="1"/>
</dbReference>
<dbReference type="PRINTS" id="PR00449">
    <property type="entry name" value="RASTRNSFRMNG"/>
</dbReference>
<dbReference type="SMART" id="SM00175">
    <property type="entry name" value="RAB"/>
    <property type="match status" value="1"/>
</dbReference>
<dbReference type="SMART" id="SM00176">
    <property type="entry name" value="RAN"/>
    <property type="match status" value="1"/>
</dbReference>
<dbReference type="SMART" id="SM00173">
    <property type="entry name" value="RAS"/>
    <property type="match status" value="1"/>
</dbReference>
<dbReference type="SMART" id="SM00174">
    <property type="entry name" value="RHO"/>
    <property type="match status" value="1"/>
</dbReference>
<dbReference type="SUPFAM" id="SSF52540">
    <property type="entry name" value="P-loop containing nucleoside triphosphate hydrolases"/>
    <property type="match status" value="1"/>
</dbReference>
<dbReference type="PROSITE" id="PS51419">
    <property type="entry name" value="RAB"/>
    <property type="match status" value="1"/>
</dbReference>